<feature type="chain" id="PRO_0000319830" description="3-isopropylmalate dehydratase large subunit">
    <location>
        <begin position="1"/>
        <end position="475"/>
    </location>
</feature>
<feature type="binding site" evidence="1">
    <location>
        <position position="349"/>
    </location>
    <ligand>
        <name>[4Fe-4S] cluster</name>
        <dbReference type="ChEBI" id="CHEBI:49883"/>
    </ligand>
</feature>
<feature type="binding site" evidence="1">
    <location>
        <position position="409"/>
    </location>
    <ligand>
        <name>[4Fe-4S] cluster</name>
        <dbReference type="ChEBI" id="CHEBI:49883"/>
    </ligand>
</feature>
<feature type="binding site" evidence="1">
    <location>
        <position position="412"/>
    </location>
    <ligand>
        <name>[4Fe-4S] cluster</name>
        <dbReference type="ChEBI" id="CHEBI:49883"/>
    </ligand>
</feature>
<gene>
    <name evidence="1" type="primary">leuC</name>
    <name type="ordered locus">Rsph17029_2523</name>
</gene>
<evidence type="ECO:0000255" key="1">
    <source>
        <dbReference type="HAMAP-Rule" id="MF_01026"/>
    </source>
</evidence>
<name>LEUC_CERS1</name>
<accession>A3PMQ9</accession>
<proteinExistence type="inferred from homology"/>
<protein>
    <recommendedName>
        <fullName evidence="1">3-isopropylmalate dehydratase large subunit</fullName>
        <ecNumber evidence="1">4.2.1.33</ecNumber>
    </recommendedName>
    <alternativeName>
        <fullName evidence="1">Alpha-IPM isomerase</fullName>
        <shortName evidence="1">IPMI</shortName>
    </alternativeName>
    <alternativeName>
        <fullName evidence="1">Isopropylmalate isomerase</fullName>
    </alternativeName>
</protein>
<dbReference type="EC" id="4.2.1.33" evidence="1"/>
<dbReference type="EMBL" id="CP000577">
    <property type="protein sequence ID" value="ABN77625.1"/>
    <property type="molecule type" value="Genomic_DNA"/>
</dbReference>
<dbReference type="RefSeq" id="WP_011841723.1">
    <property type="nucleotide sequence ID" value="NC_009049.1"/>
</dbReference>
<dbReference type="SMR" id="A3PMQ9"/>
<dbReference type="KEGG" id="rsh:Rsph17029_2523"/>
<dbReference type="HOGENOM" id="CLU_006714_3_4_5"/>
<dbReference type="UniPathway" id="UPA00048">
    <property type="reaction ID" value="UER00071"/>
</dbReference>
<dbReference type="GO" id="GO:0003861">
    <property type="term" value="F:3-isopropylmalate dehydratase activity"/>
    <property type="evidence" value="ECO:0007669"/>
    <property type="project" value="UniProtKB-UniRule"/>
</dbReference>
<dbReference type="GO" id="GO:0051539">
    <property type="term" value="F:4 iron, 4 sulfur cluster binding"/>
    <property type="evidence" value="ECO:0007669"/>
    <property type="project" value="UniProtKB-KW"/>
</dbReference>
<dbReference type="GO" id="GO:0046872">
    <property type="term" value="F:metal ion binding"/>
    <property type="evidence" value="ECO:0007669"/>
    <property type="project" value="UniProtKB-KW"/>
</dbReference>
<dbReference type="GO" id="GO:0009098">
    <property type="term" value="P:L-leucine biosynthetic process"/>
    <property type="evidence" value="ECO:0007669"/>
    <property type="project" value="UniProtKB-UniRule"/>
</dbReference>
<dbReference type="CDD" id="cd01583">
    <property type="entry name" value="IPMI"/>
    <property type="match status" value="1"/>
</dbReference>
<dbReference type="FunFam" id="3.30.499.10:FF:000006">
    <property type="entry name" value="3-isopropylmalate dehydratase large subunit"/>
    <property type="match status" value="1"/>
</dbReference>
<dbReference type="FunFam" id="3.30.499.10:FF:000007">
    <property type="entry name" value="3-isopropylmalate dehydratase large subunit"/>
    <property type="match status" value="1"/>
</dbReference>
<dbReference type="Gene3D" id="3.30.499.10">
    <property type="entry name" value="Aconitase, domain 3"/>
    <property type="match status" value="2"/>
</dbReference>
<dbReference type="HAMAP" id="MF_01026">
    <property type="entry name" value="LeuC_type1"/>
    <property type="match status" value="1"/>
</dbReference>
<dbReference type="InterPro" id="IPR004430">
    <property type="entry name" value="3-IsopropMal_deHydase_lsu"/>
</dbReference>
<dbReference type="InterPro" id="IPR015931">
    <property type="entry name" value="Acnase/IPM_dHydase_lsu_aba_1/3"/>
</dbReference>
<dbReference type="InterPro" id="IPR001030">
    <property type="entry name" value="Acoase/IPM_deHydtase_lsu_aba"/>
</dbReference>
<dbReference type="InterPro" id="IPR018136">
    <property type="entry name" value="Aconitase_4Fe-4S_BS"/>
</dbReference>
<dbReference type="InterPro" id="IPR036008">
    <property type="entry name" value="Aconitase_4Fe-4S_dom"/>
</dbReference>
<dbReference type="InterPro" id="IPR050067">
    <property type="entry name" value="IPM_dehydratase_rel_enz"/>
</dbReference>
<dbReference type="InterPro" id="IPR033941">
    <property type="entry name" value="IPMI_cat"/>
</dbReference>
<dbReference type="NCBIfam" id="TIGR00170">
    <property type="entry name" value="leuC"/>
    <property type="match status" value="1"/>
</dbReference>
<dbReference type="NCBIfam" id="NF004016">
    <property type="entry name" value="PRK05478.1"/>
    <property type="match status" value="1"/>
</dbReference>
<dbReference type="NCBIfam" id="NF009116">
    <property type="entry name" value="PRK12466.1"/>
    <property type="match status" value="1"/>
</dbReference>
<dbReference type="PANTHER" id="PTHR43822:SF9">
    <property type="entry name" value="3-ISOPROPYLMALATE DEHYDRATASE"/>
    <property type="match status" value="1"/>
</dbReference>
<dbReference type="PANTHER" id="PTHR43822">
    <property type="entry name" value="HOMOACONITASE, MITOCHONDRIAL-RELATED"/>
    <property type="match status" value="1"/>
</dbReference>
<dbReference type="Pfam" id="PF00330">
    <property type="entry name" value="Aconitase"/>
    <property type="match status" value="1"/>
</dbReference>
<dbReference type="PRINTS" id="PR00415">
    <property type="entry name" value="ACONITASE"/>
</dbReference>
<dbReference type="SUPFAM" id="SSF53732">
    <property type="entry name" value="Aconitase iron-sulfur domain"/>
    <property type="match status" value="1"/>
</dbReference>
<dbReference type="PROSITE" id="PS00450">
    <property type="entry name" value="ACONITASE_1"/>
    <property type="match status" value="1"/>
</dbReference>
<dbReference type="PROSITE" id="PS01244">
    <property type="entry name" value="ACONITASE_2"/>
    <property type="match status" value="1"/>
</dbReference>
<comment type="function">
    <text evidence="1">Catalyzes the isomerization between 2-isopropylmalate and 3-isopropylmalate, via the formation of 2-isopropylmaleate.</text>
</comment>
<comment type="catalytic activity">
    <reaction evidence="1">
        <text>(2R,3S)-3-isopropylmalate = (2S)-2-isopropylmalate</text>
        <dbReference type="Rhea" id="RHEA:32287"/>
        <dbReference type="ChEBI" id="CHEBI:1178"/>
        <dbReference type="ChEBI" id="CHEBI:35121"/>
        <dbReference type="EC" id="4.2.1.33"/>
    </reaction>
</comment>
<comment type="cofactor">
    <cofactor evidence="1">
        <name>[4Fe-4S] cluster</name>
        <dbReference type="ChEBI" id="CHEBI:49883"/>
    </cofactor>
    <text evidence="1">Binds 1 [4Fe-4S] cluster per subunit.</text>
</comment>
<comment type="pathway">
    <text evidence="1">Amino-acid biosynthesis; L-leucine biosynthesis; L-leucine from 3-methyl-2-oxobutanoate: step 2/4.</text>
</comment>
<comment type="subunit">
    <text evidence="1">Heterodimer of LeuC and LeuD.</text>
</comment>
<comment type="similarity">
    <text evidence="1">Belongs to the aconitase/IPM isomerase family. LeuC type 1 subfamily.</text>
</comment>
<sequence>MTAPRTLYDKIWDDHVVHQSEDGTCLLYIDRHLVHEVTSPQAFEGLRMTGRKVRAPEKTIAVPDHNVPTTEGRDTKIDNEESRIQVEALDRNARDFGINYYPVSDIRQGIVHIVGPEQGWTLPGMTVVCGDSHTATHGAFGALAHGIGTSEVEHVLATQTLIQKKSKNMKVEITGSLRPGVTAKDITLSVIGLTGTAGGTGYVIEYCGQAIRELSMEGRMTVCNMAIEGGARAGLIAPDEKTFAYVMGRPHAPKGAAWEAALAYWKTLFTDKGAQFDKVVTIRGEDIAPVVTWGTSPEDVLPITATVPAPEDFTGGKVEAARRSLEYMGLTPGQKLTDIKIDTVFIGSCTNGRIEDLRAAAEILKGKKVAPGMRAMVVPGSGLVRAQAEEEGLAQIFIDAGFEWRLAGCSMCLAMNPDQLSPGERCASTSNRNFEGRQGRNGRTHLVSPGMAAAAAITGHLTDVRDLMMAPAEPA</sequence>
<keyword id="KW-0004">4Fe-4S</keyword>
<keyword id="KW-0028">Amino-acid biosynthesis</keyword>
<keyword id="KW-0100">Branched-chain amino acid biosynthesis</keyword>
<keyword id="KW-0408">Iron</keyword>
<keyword id="KW-0411">Iron-sulfur</keyword>
<keyword id="KW-0432">Leucine biosynthesis</keyword>
<keyword id="KW-0456">Lyase</keyword>
<keyword id="KW-0479">Metal-binding</keyword>
<reference key="1">
    <citation type="submission" date="2007-02" db="EMBL/GenBank/DDBJ databases">
        <title>Complete sequence of chromosome 1 of Rhodobacter sphaeroides ATCC 17029.</title>
        <authorList>
            <person name="Copeland A."/>
            <person name="Lucas S."/>
            <person name="Lapidus A."/>
            <person name="Barry K."/>
            <person name="Detter J.C."/>
            <person name="Glavina del Rio T."/>
            <person name="Hammon N."/>
            <person name="Israni S."/>
            <person name="Dalin E."/>
            <person name="Tice H."/>
            <person name="Pitluck S."/>
            <person name="Kiss H."/>
            <person name="Brettin T."/>
            <person name="Bruce D."/>
            <person name="Han C."/>
            <person name="Tapia R."/>
            <person name="Gilna P."/>
            <person name="Schmutz J."/>
            <person name="Larimer F."/>
            <person name="Land M."/>
            <person name="Hauser L."/>
            <person name="Kyrpides N."/>
            <person name="Mikhailova N."/>
            <person name="Richardson P."/>
            <person name="Mackenzie C."/>
            <person name="Choudhary M."/>
            <person name="Donohue T.J."/>
            <person name="Kaplan S."/>
        </authorList>
    </citation>
    <scope>NUCLEOTIDE SEQUENCE [LARGE SCALE GENOMIC DNA]</scope>
    <source>
        <strain>ATCC 17029 / ATH 2.4.9</strain>
    </source>
</reference>
<organism>
    <name type="scientific">Cereibacter sphaeroides (strain ATCC 17029 / ATH 2.4.9)</name>
    <name type="common">Rhodobacter sphaeroides</name>
    <dbReference type="NCBI Taxonomy" id="349101"/>
    <lineage>
        <taxon>Bacteria</taxon>
        <taxon>Pseudomonadati</taxon>
        <taxon>Pseudomonadota</taxon>
        <taxon>Alphaproteobacteria</taxon>
        <taxon>Rhodobacterales</taxon>
        <taxon>Paracoccaceae</taxon>
        <taxon>Cereibacter</taxon>
    </lineage>
</organism>